<protein>
    <recommendedName>
        <fullName evidence="1">Maturase K</fullName>
    </recommendedName>
    <alternativeName>
        <fullName evidence="1">Intron maturase</fullName>
    </alternativeName>
</protein>
<dbReference type="EMBL" id="AY035194">
    <property type="protein sequence ID" value="AAK61802.1"/>
    <property type="molecule type" value="Genomic_DNA"/>
</dbReference>
<dbReference type="GO" id="GO:0009507">
    <property type="term" value="C:chloroplast"/>
    <property type="evidence" value="ECO:0007669"/>
    <property type="project" value="UniProtKB-SubCell"/>
</dbReference>
<dbReference type="GO" id="GO:0003723">
    <property type="term" value="F:RNA binding"/>
    <property type="evidence" value="ECO:0007669"/>
    <property type="project" value="UniProtKB-KW"/>
</dbReference>
<dbReference type="GO" id="GO:0006397">
    <property type="term" value="P:mRNA processing"/>
    <property type="evidence" value="ECO:0007669"/>
    <property type="project" value="UniProtKB-KW"/>
</dbReference>
<dbReference type="GO" id="GO:0008380">
    <property type="term" value="P:RNA splicing"/>
    <property type="evidence" value="ECO:0007669"/>
    <property type="project" value="UniProtKB-UniRule"/>
</dbReference>
<dbReference type="GO" id="GO:0008033">
    <property type="term" value="P:tRNA processing"/>
    <property type="evidence" value="ECO:0007669"/>
    <property type="project" value="UniProtKB-KW"/>
</dbReference>
<dbReference type="HAMAP" id="MF_01390">
    <property type="entry name" value="MatK"/>
    <property type="match status" value="1"/>
</dbReference>
<dbReference type="InterPro" id="IPR024937">
    <property type="entry name" value="Domain_X"/>
</dbReference>
<dbReference type="InterPro" id="IPR002866">
    <property type="entry name" value="Maturase_MatK"/>
</dbReference>
<dbReference type="InterPro" id="IPR024942">
    <property type="entry name" value="Maturase_MatK_N"/>
</dbReference>
<dbReference type="PANTHER" id="PTHR34811">
    <property type="entry name" value="MATURASE K"/>
    <property type="match status" value="1"/>
</dbReference>
<dbReference type="PANTHER" id="PTHR34811:SF1">
    <property type="entry name" value="MATURASE K"/>
    <property type="match status" value="1"/>
</dbReference>
<dbReference type="Pfam" id="PF01348">
    <property type="entry name" value="Intron_maturas2"/>
    <property type="match status" value="1"/>
</dbReference>
<dbReference type="Pfam" id="PF01824">
    <property type="entry name" value="MatK_N"/>
    <property type="match status" value="1"/>
</dbReference>
<keyword id="KW-0150">Chloroplast</keyword>
<keyword id="KW-0507">mRNA processing</keyword>
<keyword id="KW-0934">Plastid</keyword>
<keyword id="KW-0694">RNA-binding</keyword>
<keyword id="KW-0819">tRNA processing</keyword>
<name>MATK_PICMX</name>
<evidence type="ECO:0000255" key="1">
    <source>
        <dbReference type="HAMAP-Rule" id="MF_01390"/>
    </source>
</evidence>
<reference key="1">
    <citation type="submission" date="2001-05" db="EMBL/GenBank/DDBJ databases">
        <title>Phylogenetic analysis of Picea species based on chloroplast and mitochondrial gene sequences.</title>
        <authorList>
            <person name="Germano J."/>
            <person name="Thorner A.R."/>
            <person name="Klein A.S."/>
        </authorList>
    </citation>
    <scope>NUCLEOTIDE SEQUENCE [GENOMIC DNA]</scope>
</reference>
<sequence>MDEFHRYGKEDSSWQQCFLYPLFFQEDLYAISHDHYLDGSSSSEPMEHLSSNDQFSFLTVKRLIGQIRQQNHSIVLFVNCDPNPLVDRKKSSYSESVLEGLTLVLEVPFSIRSKYSVEGMNEWKSFRSIHSIFPFLEDKFPHSNYVSDTRIPYSIHPEILVRTFRRWIGDAPSLHPLRSILYEYRNSSESLQRSIIVVPKVNTRFFLFLWNNYVYECESILVSLLKRSSHSRSLSHGSFPQRTHFHRKIKNIFLFSRRNSFQSIWSLKDPNIHYVRYGERSIIAIKGTNLLVKKYRYYLPIFRQCYFHLWNEPYRVCSHQLSKNCSSSLGYFLRFRMKPLLVKTKMLDELFIADLITDEFDPIVPIVPIIGLLSREKFCDISGRPISKLSWTSLTDDDILDRFDRIWRNLFHYYSGSFGRDGLYRIKYILSLSCAKTLACKHKSTIRVVRKELGPELFKKSFSKERELDSPPFSSKAAARSQRERIWHSDIPQINPLAHSWQKIQDLKIENLFDQ</sequence>
<gene>
    <name evidence="1" type="primary">matK</name>
</gene>
<accession>Q6YP19</accession>
<comment type="function">
    <text evidence="1">Usually encoded in the trnK tRNA gene intron. Probably assists in splicing its own and other chloroplast group II introns.</text>
</comment>
<comment type="subcellular location">
    <subcellularLocation>
        <location>Plastid</location>
        <location>Chloroplast</location>
    </subcellularLocation>
</comment>
<comment type="similarity">
    <text evidence="1">Belongs to the intron maturase 2 family. MatK subfamily.</text>
</comment>
<organism>
    <name type="scientific">Picea mexicana</name>
    <name type="common">Mexican spruce</name>
    <name type="synonym">Picea engelmannii subsp. mexicana</name>
    <dbReference type="NCBI Taxonomy" id="39833"/>
    <lineage>
        <taxon>Eukaryota</taxon>
        <taxon>Viridiplantae</taxon>
        <taxon>Streptophyta</taxon>
        <taxon>Embryophyta</taxon>
        <taxon>Tracheophyta</taxon>
        <taxon>Spermatophyta</taxon>
        <taxon>Pinopsida</taxon>
        <taxon>Pinidae</taxon>
        <taxon>Conifers I</taxon>
        <taxon>Pinales</taxon>
        <taxon>Pinaceae</taxon>
        <taxon>Picea</taxon>
    </lineage>
</organism>
<geneLocation type="chloroplast"/>
<feature type="chain" id="PRO_0000143598" description="Maturase K">
    <location>
        <begin position="1"/>
        <end position="515"/>
    </location>
</feature>
<proteinExistence type="inferred from homology"/>